<keyword id="KW-0687">Ribonucleoprotein</keyword>
<keyword id="KW-0689">Ribosomal protein</keyword>
<keyword id="KW-0694">RNA-binding</keyword>
<keyword id="KW-0699">rRNA-binding</keyword>
<keyword id="KW-0820">tRNA-binding</keyword>
<evidence type="ECO:0000255" key="1">
    <source>
        <dbReference type="HAMAP-Rule" id="MF_00480"/>
    </source>
</evidence>
<evidence type="ECO:0000305" key="2"/>
<name>RS7_XANOM</name>
<protein>
    <recommendedName>
        <fullName evidence="1">Small ribosomal subunit protein uS7</fullName>
    </recommendedName>
    <alternativeName>
        <fullName evidence="2">30S ribosomal protein S7</fullName>
    </alternativeName>
</protein>
<dbReference type="EMBL" id="AP008229">
    <property type="protein sequence ID" value="BAE70146.1"/>
    <property type="molecule type" value="Genomic_DNA"/>
</dbReference>
<dbReference type="RefSeq" id="WP_011260032.1">
    <property type="nucleotide sequence ID" value="NC_007705.1"/>
</dbReference>
<dbReference type="SMR" id="Q2NZY1"/>
<dbReference type="GeneID" id="93986251"/>
<dbReference type="KEGG" id="xom:XOO3391"/>
<dbReference type="HOGENOM" id="CLU_072226_1_1_6"/>
<dbReference type="GO" id="GO:0015935">
    <property type="term" value="C:small ribosomal subunit"/>
    <property type="evidence" value="ECO:0007669"/>
    <property type="project" value="InterPro"/>
</dbReference>
<dbReference type="GO" id="GO:0019843">
    <property type="term" value="F:rRNA binding"/>
    <property type="evidence" value="ECO:0007669"/>
    <property type="project" value="UniProtKB-UniRule"/>
</dbReference>
<dbReference type="GO" id="GO:0003735">
    <property type="term" value="F:structural constituent of ribosome"/>
    <property type="evidence" value="ECO:0007669"/>
    <property type="project" value="InterPro"/>
</dbReference>
<dbReference type="GO" id="GO:0000049">
    <property type="term" value="F:tRNA binding"/>
    <property type="evidence" value="ECO:0007669"/>
    <property type="project" value="UniProtKB-UniRule"/>
</dbReference>
<dbReference type="GO" id="GO:0006412">
    <property type="term" value="P:translation"/>
    <property type="evidence" value="ECO:0007669"/>
    <property type="project" value="UniProtKB-UniRule"/>
</dbReference>
<dbReference type="CDD" id="cd14869">
    <property type="entry name" value="uS7_Bacteria"/>
    <property type="match status" value="1"/>
</dbReference>
<dbReference type="FunFam" id="1.10.455.10:FF:000001">
    <property type="entry name" value="30S ribosomal protein S7"/>
    <property type="match status" value="1"/>
</dbReference>
<dbReference type="Gene3D" id="1.10.455.10">
    <property type="entry name" value="Ribosomal protein S7 domain"/>
    <property type="match status" value="1"/>
</dbReference>
<dbReference type="HAMAP" id="MF_00480_B">
    <property type="entry name" value="Ribosomal_uS7_B"/>
    <property type="match status" value="1"/>
</dbReference>
<dbReference type="InterPro" id="IPR000235">
    <property type="entry name" value="Ribosomal_uS7"/>
</dbReference>
<dbReference type="InterPro" id="IPR005717">
    <property type="entry name" value="Ribosomal_uS7_bac/org-type"/>
</dbReference>
<dbReference type="InterPro" id="IPR020606">
    <property type="entry name" value="Ribosomal_uS7_CS"/>
</dbReference>
<dbReference type="InterPro" id="IPR023798">
    <property type="entry name" value="Ribosomal_uS7_dom"/>
</dbReference>
<dbReference type="InterPro" id="IPR036823">
    <property type="entry name" value="Ribosomal_uS7_dom_sf"/>
</dbReference>
<dbReference type="NCBIfam" id="TIGR01029">
    <property type="entry name" value="rpsG_bact"/>
    <property type="match status" value="1"/>
</dbReference>
<dbReference type="PANTHER" id="PTHR11205">
    <property type="entry name" value="RIBOSOMAL PROTEIN S7"/>
    <property type="match status" value="1"/>
</dbReference>
<dbReference type="Pfam" id="PF00177">
    <property type="entry name" value="Ribosomal_S7"/>
    <property type="match status" value="1"/>
</dbReference>
<dbReference type="PIRSF" id="PIRSF002122">
    <property type="entry name" value="RPS7p_RPS7a_RPS5e_RPS7o"/>
    <property type="match status" value="1"/>
</dbReference>
<dbReference type="SUPFAM" id="SSF47973">
    <property type="entry name" value="Ribosomal protein S7"/>
    <property type="match status" value="1"/>
</dbReference>
<dbReference type="PROSITE" id="PS00052">
    <property type="entry name" value="RIBOSOMAL_S7"/>
    <property type="match status" value="1"/>
</dbReference>
<proteinExistence type="inferred from homology"/>
<gene>
    <name evidence="1" type="primary">rpsG</name>
    <name type="ordered locus">XOO3391</name>
</gene>
<feature type="chain" id="PRO_0000241787" description="Small ribosomal subunit protein uS7">
    <location>
        <begin position="1"/>
        <end position="155"/>
    </location>
</feature>
<comment type="function">
    <text evidence="1">One of the primary rRNA binding proteins, it binds directly to 16S rRNA where it nucleates assembly of the head domain of the 30S subunit. Is located at the subunit interface close to the decoding center, probably blocks exit of the E-site tRNA.</text>
</comment>
<comment type="subunit">
    <text evidence="1">Part of the 30S ribosomal subunit. Contacts proteins S9 and S11.</text>
</comment>
<comment type="similarity">
    <text evidence="1">Belongs to the universal ribosomal protein uS7 family.</text>
</comment>
<sequence length="155" mass="17258">MSRKGSTPQRTVLPDPKHGSETIARFINMVMQSGKKSVAEKIVYGAMDVIGEKNPNAIELVQKALDNVAPAVEVKSRRVGGATYQVPVEVRSSRRMALAMRWLIDSARKRGENTMPRKLAAELLDAAESRGGAIKKREETHRMAEANKAFAHYRW</sequence>
<accession>Q2NZY1</accession>
<organism>
    <name type="scientific">Xanthomonas oryzae pv. oryzae (strain MAFF 311018)</name>
    <dbReference type="NCBI Taxonomy" id="342109"/>
    <lineage>
        <taxon>Bacteria</taxon>
        <taxon>Pseudomonadati</taxon>
        <taxon>Pseudomonadota</taxon>
        <taxon>Gammaproteobacteria</taxon>
        <taxon>Lysobacterales</taxon>
        <taxon>Lysobacteraceae</taxon>
        <taxon>Xanthomonas</taxon>
    </lineage>
</organism>
<reference key="1">
    <citation type="journal article" date="2005" name="Jpn. Agric. Res. Q.">
        <title>Genome sequence of Xanthomonas oryzae pv. oryzae suggests contribution of large numbers of effector genes and insertion sequences to its race diversity.</title>
        <authorList>
            <person name="Ochiai H."/>
            <person name="Inoue Y."/>
            <person name="Takeya M."/>
            <person name="Sasaki A."/>
            <person name="Kaku H."/>
        </authorList>
    </citation>
    <scope>NUCLEOTIDE SEQUENCE [LARGE SCALE GENOMIC DNA]</scope>
    <source>
        <strain>MAFF 311018</strain>
    </source>
</reference>